<keyword id="KW-0004">4Fe-4S</keyword>
<keyword id="KW-0408">Iron</keyword>
<keyword id="KW-0411">Iron-sulfur</keyword>
<keyword id="KW-0472">Membrane</keyword>
<keyword id="KW-0479">Metal-binding</keyword>
<keyword id="KW-0520">NAD</keyword>
<keyword id="KW-0521">NADP</keyword>
<keyword id="KW-0618">Plastoquinone</keyword>
<keyword id="KW-0874">Quinone</keyword>
<keyword id="KW-1185">Reference proteome</keyword>
<keyword id="KW-0793">Thylakoid</keyword>
<keyword id="KW-1278">Translocase</keyword>
<keyword id="KW-0813">Transport</keyword>
<dbReference type="EC" id="7.1.1.-" evidence="1"/>
<dbReference type="EMBL" id="CP001287">
    <property type="protein sequence ID" value="ACK65115.1"/>
    <property type="molecule type" value="Genomic_DNA"/>
</dbReference>
<dbReference type="RefSeq" id="WP_012594390.1">
    <property type="nucleotide sequence ID" value="NC_011726.1"/>
</dbReference>
<dbReference type="SMR" id="B7K0X4"/>
<dbReference type="STRING" id="41431.PCC8801_1040"/>
<dbReference type="KEGG" id="cyp:PCC8801_1040"/>
<dbReference type="eggNOG" id="COG0377">
    <property type="taxonomic scope" value="Bacteria"/>
</dbReference>
<dbReference type="HOGENOM" id="CLU_055737_2_1_3"/>
<dbReference type="OrthoDB" id="9786737at2"/>
<dbReference type="Proteomes" id="UP000008204">
    <property type="component" value="Chromosome"/>
</dbReference>
<dbReference type="GO" id="GO:0031676">
    <property type="term" value="C:plasma membrane-derived thylakoid membrane"/>
    <property type="evidence" value="ECO:0007669"/>
    <property type="project" value="UniProtKB-SubCell"/>
</dbReference>
<dbReference type="GO" id="GO:0045271">
    <property type="term" value="C:respiratory chain complex I"/>
    <property type="evidence" value="ECO:0007669"/>
    <property type="project" value="TreeGrafter"/>
</dbReference>
<dbReference type="GO" id="GO:0051539">
    <property type="term" value="F:4 iron, 4 sulfur cluster binding"/>
    <property type="evidence" value="ECO:0007669"/>
    <property type="project" value="UniProtKB-KW"/>
</dbReference>
<dbReference type="GO" id="GO:0005506">
    <property type="term" value="F:iron ion binding"/>
    <property type="evidence" value="ECO:0007669"/>
    <property type="project" value="UniProtKB-UniRule"/>
</dbReference>
<dbReference type="GO" id="GO:0008137">
    <property type="term" value="F:NADH dehydrogenase (ubiquinone) activity"/>
    <property type="evidence" value="ECO:0007669"/>
    <property type="project" value="InterPro"/>
</dbReference>
<dbReference type="GO" id="GO:0048038">
    <property type="term" value="F:quinone binding"/>
    <property type="evidence" value="ECO:0007669"/>
    <property type="project" value="UniProtKB-KW"/>
</dbReference>
<dbReference type="GO" id="GO:0009060">
    <property type="term" value="P:aerobic respiration"/>
    <property type="evidence" value="ECO:0007669"/>
    <property type="project" value="TreeGrafter"/>
</dbReference>
<dbReference type="GO" id="GO:0015990">
    <property type="term" value="P:electron transport coupled proton transport"/>
    <property type="evidence" value="ECO:0007669"/>
    <property type="project" value="TreeGrafter"/>
</dbReference>
<dbReference type="GO" id="GO:0019684">
    <property type="term" value="P:photosynthesis, light reaction"/>
    <property type="evidence" value="ECO:0007669"/>
    <property type="project" value="UniProtKB-UniRule"/>
</dbReference>
<dbReference type="FunFam" id="3.40.50.12280:FF:000003">
    <property type="entry name" value="NAD(P)H-quinone oxidoreductase subunit K, chloroplastic"/>
    <property type="match status" value="1"/>
</dbReference>
<dbReference type="Gene3D" id="3.40.50.12280">
    <property type="match status" value="1"/>
</dbReference>
<dbReference type="HAMAP" id="MF_01356">
    <property type="entry name" value="NDH1_NuoB"/>
    <property type="match status" value="1"/>
</dbReference>
<dbReference type="InterPro" id="IPR006137">
    <property type="entry name" value="NADH_UbQ_OxRdtase-like_20kDa"/>
</dbReference>
<dbReference type="InterPro" id="IPR006138">
    <property type="entry name" value="NADH_UQ_OxRdtase_20Kd_su"/>
</dbReference>
<dbReference type="NCBIfam" id="TIGR01957">
    <property type="entry name" value="nuoB_fam"/>
    <property type="match status" value="1"/>
</dbReference>
<dbReference type="NCBIfam" id="NF005012">
    <property type="entry name" value="PRK06411.1"/>
    <property type="match status" value="1"/>
</dbReference>
<dbReference type="PANTHER" id="PTHR11995">
    <property type="entry name" value="NADH DEHYDROGENASE"/>
    <property type="match status" value="1"/>
</dbReference>
<dbReference type="PANTHER" id="PTHR11995:SF14">
    <property type="entry name" value="NADH DEHYDROGENASE [UBIQUINONE] IRON-SULFUR PROTEIN 7, MITOCHONDRIAL"/>
    <property type="match status" value="1"/>
</dbReference>
<dbReference type="Pfam" id="PF01058">
    <property type="entry name" value="Oxidored_q6"/>
    <property type="match status" value="1"/>
</dbReference>
<dbReference type="SUPFAM" id="SSF56770">
    <property type="entry name" value="HydA/Nqo6-like"/>
    <property type="match status" value="1"/>
</dbReference>
<dbReference type="PROSITE" id="PS01150">
    <property type="entry name" value="COMPLEX1_20K"/>
    <property type="match status" value="1"/>
</dbReference>
<sequence length="250" mass="27764">MSPNPTPDLTTIQRQQTEKILNPIARGQVTQDLSENIILTTVDDLHNWARLSSLWPLLYGTACCFIEFAALIGSRFDFDRFGLVPRSSPRQADLIITAGTITMKMAPALVRLYEEMPEPKYVIAMGACTITGGMFSSDSTTAVRGVDKLIPVDVYIPGCPPRPEAIFDAIIKLRKKVSNETIQERATVMEQTHRYYSTTHNMKAVDPILTGKYLQTATRQTPPKELTDAIGMPIPPALASQQQKEEINRG</sequence>
<evidence type="ECO:0000255" key="1">
    <source>
        <dbReference type="HAMAP-Rule" id="MF_01356"/>
    </source>
</evidence>
<gene>
    <name evidence="1" type="primary">ndhK</name>
    <name type="ordered locus">PCC8801_1040</name>
</gene>
<protein>
    <recommendedName>
        <fullName evidence="1">NAD(P)H-quinone oxidoreductase subunit K</fullName>
        <ecNumber evidence="1">7.1.1.-</ecNumber>
    </recommendedName>
    <alternativeName>
        <fullName evidence="1">NAD(P)H dehydrogenase I subunit K</fullName>
    </alternativeName>
    <alternativeName>
        <fullName evidence="1">NDH-1 subunit K</fullName>
        <shortName evidence="1">NDH-K</shortName>
    </alternativeName>
</protein>
<proteinExistence type="inferred from homology"/>
<name>NDHK_RIPO1</name>
<accession>B7K0X4</accession>
<comment type="function">
    <text evidence="1">NDH-1 shuttles electrons from an unknown electron donor, via FMN and iron-sulfur (Fe-S) centers, to quinones in the respiratory and/or the photosynthetic chain. The immediate electron acceptor for the enzyme in this species is believed to be plastoquinone. Couples the redox reaction to proton translocation, and thus conserves the redox energy in a proton gradient. Cyanobacterial NDH-1 also plays a role in inorganic carbon-concentration.</text>
</comment>
<comment type="catalytic activity">
    <reaction evidence="1">
        <text>a plastoquinone + NADH + (n+1) H(+)(in) = a plastoquinol + NAD(+) + n H(+)(out)</text>
        <dbReference type="Rhea" id="RHEA:42608"/>
        <dbReference type="Rhea" id="RHEA-COMP:9561"/>
        <dbReference type="Rhea" id="RHEA-COMP:9562"/>
        <dbReference type="ChEBI" id="CHEBI:15378"/>
        <dbReference type="ChEBI" id="CHEBI:17757"/>
        <dbReference type="ChEBI" id="CHEBI:57540"/>
        <dbReference type="ChEBI" id="CHEBI:57945"/>
        <dbReference type="ChEBI" id="CHEBI:62192"/>
    </reaction>
</comment>
<comment type="catalytic activity">
    <reaction evidence="1">
        <text>a plastoquinone + NADPH + (n+1) H(+)(in) = a plastoquinol + NADP(+) + n H(+)(out)</text>
        <dbReference type="Rhea" id="RHEA:42612"/>
        <dbReference type="Rhea" id="RHEA-COMP:9561"/>
        <dbReference type="Rhea" id="RHEA-COMP:9562"/>
        <dbReference type="ChEBI" id="CHEBI:15378"/>
        <dbReference type="ChEBI" id="CHEBI:17757"/>
        <dbReference type="ChEBI" id="CHEBI:57783"/>
        <dbReference type="ChEBI" id="CHEBI:58349"/>
        <dbReference type="ChEBI" id="CHEBI:62192"/>
    </reaction>
</comment>
<comment type="cofactor">
    <cofactor evidence="1">
        <name>[4Fe-4S] cluster</name>
        <dbReference type="ChEBI" id="CHEBI:49883"/>
    </cofactor>
    <text evidence="1">Binds 1 [4Fe-4S] cluster.</text>
</comment>
<comment type="subunit">
    <text evidence="1">NDH-1 can be composed of about 15 different subunits; different subcomplexes with different compositions have been identified which probably have different functions.</text>
</comment>
<comment type="subcellular location">
    <subcellularLocation>
        <location evidence="1">Cellular thylakoid membrane</location>
        <topology evidence="1">Peripheral membrane protein</topology>
        <orientation evidence="1">Cytoplasmic side</orientation>
    </subcellularLocation>
</comment>
<comment type="similarity">
    <text evidence="1">Belongs to the complex I 20 kDa subunit family.</text>
</comment>
<organism>
    <name type="scientific">Rippkaea orientalis (strain PCC 8801 / RF-1)</name>
    <name type="common">Cyanothece sp. (strain PCC 8801)</name>
    <dbReference type="NCBI Taxonomy" id="41431"/>
    <lineage>
        <taxon>Bacteria</taxon>
        <taxon>Bacillati</taxon>
        <taxon>Cyanobacteriota</taxon>
        <taxon>Cyanophyceae</taxon>
        <taxon>Oscillatoriophycideae</taxon>
        <taxon>Chroococcales</taxon>
        <taxon>Aphanothecaceae</taxon>
        <taxon>Rippkaea</taxon>
        <taxon>Rippkaea orientalis</taxon>
    </lineage>
</organism>
<reference key="1">
    <citation type="journal article" date="2011" name="MBio">
        <title>Novel metabolic attributes of the genus Cyanothece, comprising a group of unicellular nitrogen-fixing Cyanobacteria.</title>
        <authorList>
            <person name="Bandyopadhyay A."/>
            <person name="Elvitigala T."/>
            <person name="Welsh E."/>
            <person name="Stockel J."/>
            <person name="Liberton M."/>
            <person name="Min H."/>
            <person name="Sherman L.A."/>
            <person name="Pakrasi H.B."/>
        </authorList>
    </citation>
    <scope>NUCLEOTIDE SEQUENCE [LARGE SCALE GENOMIC DNA]</scope>
    <source>
        <strain>PCC 8801 / RF-1</strain>
    </source>
</reference>
<feature type="chain" id="PRO_0000376189" description="NAD(P)H-quinone oxidoreductase subunit K">
    <location>
        <begin position="1"/>
        <end position="250"/>
    </location>
</feature>
<feature type="binding site" evidence="1">
    <location>
        <position position="63"/>
    </location>
    <ligand>
        <name>[4Fe-4S] cluster</name>
        <dbReference type="ChEBI" id="CHEBI:49883"/>
    </ligand>
</feature>
<feature type="binding site" evidence="1">
    <location>
        <position position="64"/>
    </location>
    <ligand>
        <name>[4Fe-4S] cluster</name>
        <dbReference type="ChEBI" id="CHEBI:49883"/>
    </ligand>
</feature>
<feature type="binding site" evidence="1">
    <location>
        <position position="128"/>
    </location>
    <ligand>
        <name>[4Fe-4S] cluster</name>
        <dbReference type="ChEBI" id="CHEBI:49883"/>
    </ligand>
</feature>
<feature type="binding site" evidence="1">
    <location>
        <position position="159"/>
    </location>
    <ligand>
        <name>[4Fe-4S] cluster</name>
        <dbReference type="ChEBI" id="CHEBI:49883"/>
    </ligand>
</feature>